<comment type="function">
    <text evidence="1">Specifically methylates the N7 position of guanine in position 527 of 16S rRNA.</text>
</comment>
<comment type="catalytic activity">
    <reaction evidence="1">
        <text>guanosine(527) in 16S rRNA + S-adenosyl-L-methionine = N(7)-methylguanosine(527) in 16S rRNA + S-adenosyl-L-homocysteine</text>
        <dbReference type="Rhea" id="RHEA:42732"/>
        <dbReference type="Rhea" id="RHEA-COMP:10209"/>
        <dbReference type="Rhea" id="RHEA-COMP:10210"/>
        <dbReference type="ChEBI" id="CHEBI:57856"/>
        <dbReference type="ChEBI" id="CHEBI:59789"/>
        <dbReference type="ChEBI" id="CHEBI:74269"/>
        <dbReference type="ChEBI" id="CHEBI:74480"/>
        <dbReference type="EC" id="2.1.1.170"/>
    </reaction>
</comment>
<comment type="subcellular location">
    <subcellularLocation>
        <location evidence="1">Cytoplasm</location>
    </subcellularLocation>
</comment>
<comment type="similarity">
    <text evidence="1">Belongs to the methyltransferase superfamily. RNA methyltransferase RsmG family.</text>
</comment>
<proteinExistence type="inferred from homology"/>
<dbReference type="EC" id="2.1.1.170" evidence="1"/>
<dbReference type="EMBL" id="CP000671">
    <property type="protein sequence ID" value="ABQ97604.1"/>
    <property type="molecule type" value="Genomic_DNA"/>
</dbReference>
<dbReference type="SMR" id="A5UA03"/>
<dbReference type="KEGG" id="hip:CGSHiEE_00550"/>
<dbReference type="HOGENOM" id="CLU_065341_2_2_6"/>
<dbReference type="GO" id="GO:0005829">
    <property type="term" value="C:cytosol"/>
    <property type="evidence" value="ECO:0007669"/>
    <property type="project" value="TreeGrafter"/>
</dbReference>
<dbReference type="GO" id="GO:0070043">
    <property type="term" value="F:rRNA (guanine-N7-)-methyltransferase activity"/>
    <property type="evidence" value="ECO:0007669"/>
    <property type="project" value="UniProtKB-UniRule"/>
</dbReference>
<dbReference type="CDD" id="cd02440">
    <property type="entry name" value="AdoMet_MTases"/>
    <property type="match status" value="1"/>
</dbReference>
<dbReference type="FunFam" id="3.40.50.150:FF:000032">
    <property type="entry name" value="Ribosomal RNA small subunit methyltransferase G"/>
    <property type="match status" value="1"/>
</dbReference>
<dbReference type="Gene3D" id="3.40.50.150">
    <property type="entry name" value="Vaccinia Virus protein VP39"/>
    <property type="match status" value="1"/>
</dbReference>
<dbReference type="HAMAP" id="MF_00074">
    <property type="entry name" value="16SrRNA_methyltr_G"/>
    <property type="match status" value="1"/>
</dbReference>
<dbReference type="InterPro" id="IPR003682">
    <property type="entry name" value="rRNA_ssu_MeTfrase_G"/>
</dbReference>
<dbReference type="InterPro" id="IPR029063">
    <property type="entry name" value="SAM-dependent_MTases_sf"/>
</dbReference>
<dbReference type="NCBIfam" id="TIGR00138">
    <property type="entry name" value="rsmG_gidB"/>
    <property type="match status" value="1"/>
</dbReference>
<dbReference type="PANTHER" id="PTHR31760">
    <property type="entry name" value="S-ADENOSYL-L-METHIONINE-DEPENDENT METHYLTRANSFERASES SUPERFAMILY PROTEIN"/>
    <property type="match status" value="1"/>
</dbReference>
<dbReference type="PANTHER" id="PTHR31760:SF0">
    <property type="entry name" value="S-ADENOSYL-L-METHIONINE-DEPENDENT METHYLTRANSFERASES SUPERFAMILY PROTEIN"/>
    <property type="match status" value="1"/>
</dbReference>
<dbReference type="Pfam" id="PF02527">
    <property type="entry name" value="GidB"/>
    <property type="match status" value="1"/>
</dbReference>
<dbReference type="PIRSF" id="PIRSF003078">
    <property type="entry name" value="GidB"/>
    <property type="match status" value="1"/>
</dbReference>
<dbReference type="SUPFAM" id="SSF53335">
    <property type="entry name" value="S-adenosyl-L-methionine-dependent methyltransferases"/>
    <property type="match status" value="1"/>
</dbReference>
<reference key="1">
    <citation type="journal article" date="2007" name="Genome Biol.">
        <title>Characterization and modeling of the Haemophilus influenzae core and supragenomes based on the complete genomic sequences of Rd and 12 clinical nontypeable strains.</title>
        <authorList>
            <person name="Hogg J.S."/>
            <person name="Hu F.Z."/>
            <person name="Janto B."/>
            <person name="Boissy R."/>
            <person name="Hayes J."/>
            <person name="Keefe R."/>
            <person name="Post J.C."/>
            <person name="Ehrlich G.D."/>
        </authorList>
    </citation>
    <scope>NUCLEOTIDE SEQUENCE [LARGE SCALE GENOMIC DNA]</scope>
    <source>
        <strain>PittEE</strain>
    </source>
</reference>
<organism>
    <name type="scientific">Haemophilus influenzae (strain PittEE)</name>
    <dbReference type="NCBI Taxonomy" id="374930"/>
    <lineage>
        <taxon>Bacteria</taxon>
        <taxon>Pseudomonadati</taxon>
        <taxon>Pseudomonadota</taxon>
        <taxon>Gammaproteobacteria</taxon>
        <taxon>Pasteurellales</taxon>
        <taxon>Pasteurellaceae</taxon>
        <taxon>Haemophilus</taxon>
    </lineage>
</organism>
<protein>
    <recommendedName>
        <fullName evidence="1">Ribosomal RNA small subunit methyltransferase G</fullName>
        <ecNumber evidence="1">2.1.1.170</ecNumber>
    </recommendedName>
    <alternativeName>
        <fullName evidence="1">16S rRNA 7-methylguanosine methyltransferase</fullName>
        <shortName evidence="1">16S rRNA m7G methyltransferase</shortName>
    </alternativeName>
</protein>
<evidence type="ECO:0000255" key="1">
    <source>
        <dbReference type="HAMAP-Rule" id="MF_00074"/>
    </source>
</evidence>
<accession>A5UA03</accession>
<feature type="chain" id="PRO_1000010153" description="Ribosomal RNA small subunit methyltransferase G">
    <location>
        <begin position="1"/>
        <end position="203"/>
    </location>
</feature>
<feature type="binding site" evidence="1">
    <location>
        <position position="73"/>
    </location>
    <ligand>
        <name>S-adenosyl-L-methionine</name>
        <dbReference type="ChEBI" id="CHEBI:59789"/>
    </ligand>
</feature>
<feature type="binding site" evidence="1">
    <location>
        <position position="78"/>
    </location>
    <ligand>
        <name>S-adenosyl-L-methionine</name>
        <dbReference type="ChEBI" id="CHEBI:59789"/>
    </ligand>
</feature>
<feature type="binding site" evidence="1">
    <location>
        <begin position="124"/>
        <end position="125"/>
    </location>
    <ligand>
        <name>S-adenosyl-L-methionine</name>
        <dbReference type="ChEBI" id="CHEBI:59789"/>
    </ligand>
</feature>
<feature type="binding site" evidence="1">
    <location>
        <position position="139"/>
    </location>
    <ligand>
        <name>S-adenosyl-L-methionine</name>
        <dbReference type="ChEBI" id="CHEBI:59789"/>
    </ligand>
</feature>
<sequence>MKAKLVSLLAQANIKISDQQIQQLIDLVNLLNKWNKAYNLTSVRDPQEMLVKHILDSLVVSPYLQGDRFIDVGTGPGLPGLPLAIINPSKQFVLLDSLGKRISFIRNAIRELRLTNATPVLSRVEEYQPEDKFDGVLSRAFASLKDMTDWCYHLPKENGYFYALKGIYQEDEINELNKKYTIQKVIELSVPELIGERHLIVLR</sequence>
<name>RSMG_HAEIE</name>
<gene>
    <name evidence="1" type="primary">rsmG</name>
    <name type="ordered locus">CGSHiEE_00550</name>
</gene>
<keyword id="KW-0963">Cytoplasm</keyword>
<keyword id="KW-0489">Methyltransferase</keyword>
<keyword id="KW-0698">rRNA processing</keyword>
<keyword id="KW-0949">S-adenosyl-L-methionine</keyword>
<keyword id="KW-0808">Transferase</keyword>